<comment type="function">
    <text evidence="1 3 7 8 10">Multifunctional RNA-binding protein involved in the regulation of pre-mRNA splicing, mRNA stability and mRNA translation important for cell fate decision and differentiation (PubMed:25313962, PubMed:26844700). Plays a major role in pre-mRNA alternative splicing regulation (PubMed:25313962, PubMed:26844700). Mediates preferentially muscle-specific exon inclusion in numerous mRNAs important for striated cardiac and skeletal muscle cell differentiation (PubMed:25313962, PubMed:26844700). Binds to intronic splicing enhancer (ISE) composed of stretches of GU-rich motifs localized in flanking intron of exon that will be included by alternative splicing (PubMed:25313962). Involved in embryonic stem cell (ESC) transition to cardiac cell differentiation by promoting pre-mRNA alternative splicing events of several pluripotency and/or differentiation genes. Plays a role in the regulation of mRNA stability. Binds to 3'-untranslated region (UTR) AU-rich elements in target transcripts, such as CDKN1A and MYOG, leading to maintain their stabilities. Involved in myogenic differentiation by regulating MYOG levels. Binds to multiple regions in the mRNA 3'-UTR of TP63, hence inducing its destabilization. Also promotes the destabilization of the CHRM2 mRNA via its binding to a region in the coding sequence. Plays a role in the regulation of mRNA translation. Mediates repression of p53/TP53 mRNA translation through its binding to U-rich element in the 3'-UTR, hence preventing EIF4E from binding to p53/TP53 mRNA and translation initiation. Binds to a huge amount of mRNAs (By similarity). Required for embryonic heart development, sarcomer and M-band formation in striated muscles (PubMed:25313962, PubMed:29358667). Together with RBM20, promotes the expression of short isoforms of PDLIM5/ENH in cardiomyocytes (By similarity).</text>
</comment>
<comment type="subunit">
    <text evidence="3">Interacts with EIF4E; this interaction prevents EIF4E from binding to p53/TP53 mRNA and inhibits the assembly of translation initiation complex.</text>
</comment>
<comment type="subcellular location">
    <subcellularLocation>
        <location evidence="2">Nucleus</location>
    </subcellularLocation>
    <subcellularLocation>
        <location evidence="6">Cytoplasm</location>
    </subcellularLocation>
</comment>
<comment type="tissue specificity">
    <text evidence="7">Expressed strongly in heart and skeletal muscles (PubMed:25313962). Weakly expressed in intestine, aorta, liver, lung, kidney, uterus and bladder (PubMed:25313962).</text>
</comment>
<comment type="developmental stage">
    <text evidence="5 6 7">Expressed in embryonic heart at 11.5 and 13.5 dpc (PubMed:25313962). Expressed in MyoD-expressing myoblasts at 11.5 dpc (at protein level) (PubMed:25217815). Expressed in the early cardiac mesoderm at 7 dpc (PubMed:19658189). Expressed in the cardiac crescent at 8 dpc (PubMed:19658189). Expressed in the developing heart and somites from 9.5 to 12.5 dpc (PubMed:19658189, PubMed:25217815, PubMed:25313962). Expressed in the lens, otic vesicle, heart and weakly in the mesodermal core of the first and second branchial arches at 10.5 dpc (PubMed:25217815). Expressed in all appendicular muscle masses at the forelimb and hindlimb levels and in developing head muscles at 11.5 dpc (PubMed:25217815). Expressed in appendicular muscle masses, diaphragm muscle and developing head muscles at 12.5 dpc (PubMed:25217815).</text>
</comment>
<comment type="induction">
    <text evidence="8 9">Up-regulated during embryonic stem cell (ESC) differentiation into cardiomyocytes (PubMed:26990106). Down-regulated by microRNA-222 (miR-222) in skeletal muscle cells, leading in inhibition of muscle-specific pre-mRNA alternative splicing events and myoblast fusion (PubMed:26844700).</text>
</comment>
<comment type="domain">
    <text evidence="3">The RRM domain is necessary for mRNA stability and mRNA translation regulation.</text>
</comment>
<comment type="disruption phenotype">
    <text evidence="7 10">Mice die in utero between embryonic days 12.5 and 14.5 (PubMed:25313962, PubMed:29358667). Show multiple cardiac malformations, including defective endocardial cushion morphogenesis, ventricular septum defects, reduced trabeculation and compaction and dilated atria (PubMed:25313962, PubMed:29358667). Display loss of sarcomeres in cardiomyocytes (PubMed:25313962). Show aberrant pre-mRNA alternative splicing of key genes necessary for sarcomere formation and cardiogenesis (PubMed:25313962).</text>
</comment>
<gene>
    <name evidence="12" type="primary">Rbm24</name>
</gene>
<evidence type="ECO:0000250" key="1">
    <source>
        <dbReference type="UniProtKB" id="M0R7T6"/>
    </source>
</evidence>
<evidence type="ECO:0000250" key="2">
    <source>
        <dbReference type="UniProtKB" id="Q6GQD3"/>
    </source>
</evidence>
<evidence type="ECO:0000250" key="3">
    <source>
        <dbReference type="UniProtKB" id="Q9BX46"/>
    </source>
</evidence>
<evidence type="ECO:0000255" key="4">
    <source>
        <dbReference type="PROSITE-ProRule" id="PRU00176"/>
    </source>
</evidence>
<evidence type="ECO:0000269" key="5">
    <source>
    </source>
</evidence>
<evidence type="ECO:0000269" key="6">
    <source>
    </source>
</evidence>
<evidence type="ECO:0000269" key="7">
    <source>
    </source>
</evidence>
<evidence type="ECO:0000269" key="8">
    <source>
    </source>
</evidence>
<evidence type="ECO:0000269" key="9">
    <source>
    </source>
</evidence>
<evidence type="ECO:0000269" key="10">
    <source>
    </source>
</evidence>
<evidence type="ECO:0000305" key="11"/>
<evidence type="ECO:0000312" key="12">
    <source>
        <dbReference type="MGI" id="MGI:3610364"/>
    </source>
</evidence>
<keyword id="KW-0963">Cytoplasm</keyword>
<keyword id="KW-0221">Differentiation</keyword>
<keyword id="KW-0507">mRNA processing</keyword>
<keyword id="KW-0508">mRNA splicing</keyword>
<keyword id="KW-0539">Nucleus</keyword>
<keyword id="KW-1185">Reference proteome</keyword>
<keyword id="KW-0694">RNA-binding</keyword>
<keyword id="KW-0810">Translation regulation</keyword>
<sequence>MHTTQKDTTYTKIFVGGLPYHTTDASLRKYFEVFGDIEEAVVITDRQTGKSRGYGFVTMADRAAAERACKDPNPIIDGRKANVNLAYLGAKPRIMQPGFAFGVQQLHPALIQRPFGIPAHYVYPQAFVQPGVVIPHVQPTAAAASTTPYIDYTGAAYAQYSAAAAAAAAAAAYDQYPYAASPAAAGYVTTGGYSYAVQQPITAAAPGTAAAAAAAAAAAAAFGQYQPQQLQTDRMQ</sequence>
<proteinExistence type="evidence at protein level"/>
<protein>
    <recommendedName>
        <fullName evidence="11">RNA-binding protein 24</fullName>
    </recommendedName>
    <alternativeName>
        <fullName evidence="3">RNA-binding motif protein 24</fullName>
    </alternativeName>
</protein>
<feature type="chain" id="PRO_0000416117" description="RNA-binding protein 24">
    <location>
        <begin position="1"/>
        <end position="236"/>
    </location>
</feature>
<feature type="domain" description="RRM" evidence="4">
    <location>
        <begin position="11"/>
        <end position="88"/>
    </location>
</feature>
<feature type="region of interest" description="Necessary for interaction with EIF4E" evidence="3">
    <location>
        <begin position="175"/>
        <end position="199"/>
    </location>
</feature>
<name>RBM24_MOUSE</name>
<dbReference type="EMBL" id="AC124411">
    <property type="status" value="NOT_ANNOTATED_CDS"/>
    <property type="molecule type" value="Genomic_DNA"/>
</dbReference>
<dbReference type="CCDS" id="CCDS36651.1"/>
<dbReference type="RefSeq" id="NP_001074894.1">
    <property type="nucleotide sequence ID" value="NM_001081425.1"/>
</dbReference>
<dbReference type="SMR" id="D3Z4I3"/>
<dbReference type="BioGRID" id="578625">
    <property type="interactions" value="1"/>
</dbReference>
<dbReference type="FunCoup" id="D3Z4I3">
    <property type="interactions" value="1964"/>
</dbReference>
<dbReference type="STRING" id="10090.ENSMUSP00000043120"/>
<dbReference type="PhosphoSitePlus" id="D3Z4I3"/>
<dbReference type="PaxDb" id="10090-ENSMUSP00000043120"/>
<dbReference type="PeptideAtlas" id="D3Z4I3"/>
<dbReference type="ProteomicsDB" id="255123"/>
<dbReference type="Antibodypedia" id="44354">
    <property type="antibodies" value="87 antibodies from 20 providers"/>
</dbReference>
<dbReference type="Ensembl" id="ENSMUST00000037923.5">
    <property type="protein sequence ID" value="ENSMUSP00000043120.4"/>
    <property type="gene ID" value="ENSMUSG00000038132.7"/>
</dbReference>
<dbReference type="GeneID" id="666794"/>
<dbReference type="KEGG" id="mmu:666794"/>
<dbReference type="UCSC" id="uc007qhe.1">
    <property type="organism name" value="mouse"/>
</dbReference>
<dbReference type="AGR" id="MGI:3610364"/>
<dbReference type="CTD" id="221662"/>
<dbReference type="MGI" id="MGI:3610364">
    <property type="gene designation" value="Rbm24"/>
</dbReference>
<dbReference type="VEuPathDB" id="HostDB:ENSMUSG00000038132"/>
<dbReference type="eggNOG" id="KOG0149">
    <property type="taxonomic scope" value="Eukaryota"/>
</dbReference>
<dbReference type="eggNOG" id="KOG4205">
    <property type="taxonomic scope" value="Eukaryota"/>
</dbReference>
<dbReference type="GeneTree" id="ENSGT00940000156245"/>
<dbReference type="HOGENOM" id="CLU_065652_0_1_1"/>
<dbReference type="InParanoid" id="D3Z4I3"/>
<dbReference type="OMA" id="IPAHYMY"/>
<dbReference type="OrthoDB" id="4207594at2759"/>
<dbReference type="PhylomeDB" id="D3Z4I3"/>
<dbReference type="TreeFam" id="TF314235"/>
<dbReference type="BioGRID-ORCS" id="666794">
    <property type="hits" value="5 hits in 81 CRISPR screens"/>
</dbReference>
<dbReference type="ChiTaRS" id="Rbm24">
    <property type="organism name" value="mouse"/>
</dbReference>
<dbReference type="PRO" id="PR:D3Z4I3"/>
<dbReference type="Proteomes" id="UP000000589">
    <property type="component" value="Chromosome 13"/>
</dbReference>
<dbReference type="RNAct" id="D3Z4I3">
    <property type="molecule type" value="protein"/>
</dbReference>
<dbReference type="Bgee" id="ENSMUSG00000038132">
    <property type="expression patterns" value="Expressed in interventricular septum and 189 other cell types or tissues"/>
</dbReference>
<dbReference type="GO" id="GO:0005737">
    <property type="term" value="C:cytoplasm"/>
    <property type="evidence" value="ECO:0000314"/>
    <property type="project" value="UniProtKB"/>
</dbReference>
<dbReference type="GO" id="GO:0005829">
    <property type="term" value="C:cytosol"/>
    <property type="evidence" value="ECO:0007669"/>
    <property type="project" value="Ensembl"/>
</dbReference>
<dbReference type="GO" id="GO:0005654">
    <property type="term" value="C:nucleoplasm"/>
    <property type="evidence" value="ECO:0007669"/>
    <property type="project" value="Ensembl"/>
</dbReference>
<dbReference type="GO" id="GO:0035925">
    <property type="term" value="F:mRNA 3'-UTR AU-rich region binding"/>
    <property type="evidence" value="ECO:0000250"/>
    <property type="project" value="UniProtKB"/>
</dbReference>
<dbReference type="GO" id="GO:0003730">
    <property type="term" value="F:mRNA 3'-UTR binding"/>
    <property type="evidence" value="ECO:0000314"/>
    <property type="project" value="UniProtKB"/>
</dbReference>
<dbReference type="GO" id="GO:1990715">
    <property type="term" value="F:mRNA CDS binding"/>
    <property type="evidence" value="ECO:0000250"/>
    <property type="project" value="UniProtKB"/>
</dbReference>
<dbReference type="GO" id="GO:0097157">
    <property type="term" value="F:pre-mRNA intronic binding"/>
    <property type="evidence" value="ECO:0000314"/>
    <property type="project" value="UniProtKB"/>
</dbReference>
<dbReference type="GO" id="GO:1990825">
    <property type="term" value="F:sequence-specific mRNA binding"/>
    <property type="evidence" value="ECO:0000250"/>
    <property type="project" value="UniProtKB"/>
</dbReference>
<dbReference type="GO" id="GO:0061158">
    <property type="term" value="P:3'-UTR-mediated mRNA destabilization"/>
    <property type="evidence" value="ECO:0000250"/>
    <property type="project" value="UniProtKB"/>
</dbReference>
<dbReference type="GO" id="GO:0030154">
    <property type="term" value="P:cell differentiation"/>
    <property type="evidence" value="ECO:0007669"/>
    <property type="project" value="UniProtKB-KW"/>
</dbReference>
<dbReference type="GO" id="GO:0006974">
    <property type="term" value="P:DNA damage response"/>
    <property type="evidence" value="ECO:0000250"/>
    <property type="project" value="UniProtKB"/>
</dbReference>
<dbReference type="GO" id="GO:0003197">
    <property type="term" value="P:endocardial cushion development"/>
    <property type="evidence" value="ECO:0000315"/>
    <property type="project" value="UniProtKB"/>
</dbReference>
<dbReference type="GO" id="GO:0061157">
    <property type="term" value="P:mRNA destabilization"/>
    <property type="evidence" value="ECO:0000250"/>
    <property type="project" value="UniProtKB"/>
</dbReference>
<dbReference type="GO" id="GO:0006397">
    <property type="term" value="P:mRNA processing"/>
    <property type="evidence" value="ECO:0007669"/>
    <property type="project" value="UniProtKB-KW"/>
</dbReference>
<dbReference type="GO" id="GO:0048255">
    <property type="term" value="P:mRNA stabilization"/>
    <property type="evidence" value="ECO:0000250"/>
    <property type="project" value="UniProtKB"/>
</dbReference>
<dbReference type="GO" id="GO:2000766">
    <property type="term" value="P:negative regulation of cytoplasmic translation"/>
    <property type="evidence" value="ECO:0000250"/>
    <property type="project" value="UniProtKB"/>
</dbReference>
<dbReference type="GO" id="GO:1905870">
    <property type="term" value="P:positive regulation of 3'-UTR-mediated mRNA stabilization"/>
    <property type="evidence" value="ECO:0000250"/>
    <property type="project" value="UniProtKB"/>
</dbReference>
<dbReference type="GO" id="GO:0045663">
    <property type="term" value="P:positive regulation of myoblast differentiation"/>
    <property type="evidence" value="ECO:0000250"/>
    <property type="project" value="UniProtKB"/>
</dbReference>
<dbReference type="GO" id="GO:0010831">
    <property type="term" value="P:positive regulation of myotube differentiation"/>
    <property type="evidence" value="ECO:0000250"/>
    <property type="project" value="UniProtKB"/>
</dbReference>
<dbReference type="GO" id="GO:1902811">
    <property type="term" value="P:positive regulation of skeletal muscle fiber differentiation"/>
    <property type="evidence" value="ECO:0000315"/>
    <property type="project" value="UniProtKB"/>
</dbReference>
<dbReference type="GO" id="GO:2000738">
    <property type="term" value="P:positive regulation of stem cell differentiation"/>
    <property type="evidence" value="ECO:0000250"/>
    <property type="project" value="UniProtKB"/>
</dbReference>
<dbReference type="GO" id="GO:0000381">
    <property type="term" value="P:regulation of alternative mRNA splicing, via spliceosome"/>
    <property type="evidence" value="ECO:0000315"/>
    <property type="project" value="UniProtKB"/>
</dbReference>
<dbReference type="GO" id="GO:0043488">
    <property type="term" value="P:regulation of mRNA stability"/>
    <property type="evidence" value="ECO:0000315"/>
    <property type="project" value="UniProtKB"/>
</dbReference>
<dbReference type="GO" id="GO:0010830">
    <property type="term" value="P:regulation of myotube differentiation"/>
    <property type="evidence" value="ECO:0000315"/>
    <property type="project" value="UniProtKB"/>
</dbReference>
<dbReference type="GO" id="GO:0008380">
    <property type="term" value="P:RNA splicing"/>
    <property type="evidence" value="ECO:0007669"/>
    <property type="project" value="UniProtKB-KW"/>
</dbReference>
<dbReference type="CDD" id="cd12384">
    <property type="entry name" value="RRM_RBM24_RBM38_like"/>
    <property type="match status" value="1"/>
</dbReference>
<dbReference type="FunFam" id="3.30.70.330:FF:000077">
    <property type="entry name" value="RNA-binding motif protein 24"/>
    <property type="match status" value="1"/>
</dbReference>
<dbReference type="Gene3D" id="3.30.70.330">
    <property type="match status" value="1"/>
</dbReference>
<dbReference type="InterPro" id="IPR012677">
    <property type="entry name" value="Nucleotide-bd_a/b_plait_sf"/>
</dbReference>
<dbReference type="InterPro" id="IPR035979">
    <property type="entry name" value="RBD_domain_sf"/>
</dbReference>
<dbReference type="InterPro" id="IPR050886">
    <property type="entry name" value="RNA-binding_reg"/>
</dbReference>
<dbReference type="InterPro" id="IPR000504">
    <property type="entry name" value="RRM_dom"/>
</dbReference>
<dbReference type="PANTHER" id="PTHR48024">
    <property type="entry name" value="GEO13361P1-RELATED"/>
    <property type="match status" value="1"/>
</dbReference>
<dbReference type="PANTHER" id="PTHR48024:SF10">
    <property type="entry name" value="RNA-BINDING PROTEIN 24"/>
    <property type="match status" value="1"/>
</dbReference>
<dbReference type="Pfam" id="PF00076">
    <property type="entry name" value="RRM_1"/>
    <property type="match status" value="1"/>
</dbReference>
<dbReference type="SMART" id="SM00360">
    <property type="entry name" value="RRM"/>
    <property type="match status" value="1"/>
</dbReference>
<dbReference type="SUPFAM" id="SSF54928">
    <property type="entry name" value="RNA-binding domain, RBD"/>
    <property type="match status" value="1"/>
</dbReference>
<dbReference type="PROSITE" id="PS50102">
    <property type="entry name" value="RRM"/>
    <property type="match status" value="1"/>
</dbReference>
<accession>D3Z4I3</accession>
<organism>
    <name type="scientific">Mus musculus</name>
    <name type="common">Mouse</name>
    <dbReference type="NCBI Taxonomy" id="10090"/>
    <lineage>
        <taxon>Eukaryota</taxon>
        <taxon>Metazoa</taxon>
        <taxon>Chordata</taxon>
        <taxon>Craniata</taxon>
        <taxon>Vertebrata</taxon>
        <taxon>Euteleostomi</taxon>
        <taxon>Mammalia</taxon>
        <taxon>Eutheria</taxon>
        <taxon>Euarchontoglires</taxon>
        <taxon>Glires</taxon>
        <taxon>Rodentia</taxon>
        <taxon>Myomorpha</taxon>
        <taxon>Muroidea</taxon>
        <taxon>Muridae</taxon>
        <taxon>Murinae</taxon>
        <taxon>Mus</taxon>
        <taxon>Mus</taxon>
    </lineage>
</organism>
<reference key="1">
    <citation type="journal article" date="2009" name="PLoS Biol.">
        <title>Lineage-specific biology revealed by a finished genome assembly of the mouse.</title>
        <authorList>
            <person name="Church D.M."/>
            <person name="Goodstadt L."/>
            <person name="Hillier L.W."/>
            <person name="Zody M.C."/>
            <person name="Goldstein S."/>
            <person name="She X."/>
            <person name="Bult C.J."/>
            <person name="Agarwala R."/>
            <person name="Cherry J.L."/>
            <person name="DiCuccio M."/>
            <person name="Hlavina W."/>
            <person name="Kapustin Y."/>
            <person name="Meric P."/>
            <person name="Maglott D."/>
            <person name="Birtle Z."/>
            <person name="Marques A.C."/>
            <person name="Graves T."/>
            <person name="Zhou S."/>
            <person name="Teague B."/>
            <person name="Potamousis K."/>
            <person name="Churas C."/>
            <person name="Place M."/>
            <person name="Herschleb J."/>
            <person name="Runnheim R."/>
            <person name="Forrest D."/>
            <person name="Amos-Landgraf J."/>
            <person name="Schwartz D.C."/>
            <person name="Cheng Z."/>
            <person name="Lindblad-Toh K."/>
            <person name="Eichler E.E."/>
            <person name="Ponting C.P."/>
        </authorList>
    </citation>
    <scope>NUCLEOTIDE SEQUENCE [LARGE SCALE GENOMIC DNA]</scope>
    <source>
        <strain>C57BL/6J</strain>
    </source>
</reference>
<reference key="2">
    <citation type="journal article" date="2009" name="Stem Cells">
        <title>Global expression profile of highly enriched cardiomyocytes derived from human embryonic stem cells.</title>
        <authorList>
            <person name="Xu X.Q."/>
            <person name="Soo S.Y."/>
            <person name="Sun W."/>
            <person name="Zweigerdt R."/>
        </authorList>
    </citation>
    <scope>DEVELOPMENTAL STAGE</scope>
</reference>
<reference key="3">
    <citation type="journal article" date="2014" name="Dev. Cell">
        <title>RBM24 is a major regulator of muscle-specific alternative splicing.</title>
        <authorList>
            <person name="Yang J."/>
            <person name="Hung L.H."/>
            <person name="Licht T."/>
            <person name="Kostin S."/>
            <person name="Looso M."/>
            <person name="Khrameeva E."/>
            <person name="Bindereif A."/>
            <person name="Schneider A."/>
            <person name="Braun T."/>
        </authorList>
    </citation>
    <scope>FUNCTION</scope>
    <scope>DISRUPTION PHENOTYPE</scope>
    <scope>TISSUE SPECIFICITY</scope>
    <scope>DEVELOPMENTAL STAGE</scope>
</reference>
<reference key="4">
    <citation type="journal article" date="2014" name="Mech. Dev.">
        <title>The RNA-binding protein Rbm24 is transiently expressed in myoblasts and is required for myogenic differentiation during vertebrate development.</title>
        <authorList>
            <person name="Grifone R."/>
            <person name="Xie X."/>
            <person name="Bourgeois A."/>
            <person name="Saquet A."/>
            <person name="Duprez D."/>
            <person name="Shi D.L."/>
        </authorList>
    </citation>
    <scope>SUBCELLULAR LOCATION</scope>
    <scope>DEVELOPMENTAL STAGE</scope>
</reference>
<reference key="5">
    <citation type="journal article" date="2016" name="Cell Death Dis.">
        <title>MicroRNA-222 regulates muscle alternative splicing through Rbm24 during differentiation of skeletal muscle cells.</title>
        <authorList>
            <person name="Cardinali B."/>
            <person name="Cappella M."/>
            <person name="Provenzano C."/>
            <person name="Garcia-Manteiga J.M."/>
            <person name="Lazarevic D."/>
            <person name="Cittaro D."/>
            <person name="Martelli F."/>
            <person name="Falcone G."/>
        </authorList>
    </citation>
    <scope>FUNCTION</scope>
    <scope>INDUCTION</scope>
</reference>
<reference key="6">
    <citation type="journal article" date="2016" name="Stem Cells">
        <title>Rbm24 regulates alternative splicing switch in embryonic stem cell cardiac lineage differentiation.</title>
        <authorList>
            <person name="Zhang T."/>
            <person name="Lin Y."/>
            <person name="Liu J."/>
            <person name="Zhang Z.G."/>
            <person name="Fu W."/>
            <person name="Guo L.Y."/>
            <person name="Pan L."/>
            <person name="Kong X."/>
            <person name="Zhang M.K."/>
            <person name="Lu Y.H."/>
            <person name="Huang Z.R."/>
            <person name="Xie Q."/>
            <person name="Li W.H."/>
            <person name="Xu X.Q."/>
        </authorList>
    </citation>
    <scope>INDUCTION</scope>
</reference>
<reference key="7">
    <citation type="journal article" date="2018" name="Cell Death Differ.">
        <title>Rbm24, a target of p53, is necessary for proper expression of p53 and heart development.</title>
        <authorList>
            <person name="Zhang M."/>
            <person name="Zhang Y."/>
            <person name="Xu E."/>
            <person name="Mohibi S."/>
            <person name="de Anda D.M."/>
            <person name="Jiang Y."/>
            <person name="Zhang J."/>
            <person name="Chen X."/>
        </authorList>
    </citation>
    <scope>FUNCTION</scope>
    <scope>DISRUPTION PHENOTYPE</scope>
</reference>